<organism>
    <name type="scientific">Escherichia phage D108</name>
    <name type="common">Bacteriophage D108</name>
    <dbReference type="NCBI Taxonomy" id="665033"/>
    <lineage>
        <taxon>Viruses</taxon>
        <taxon>Duplodnaviria</taxon>
        <taxon>Heunggongvirae</taxon>
        <taxon>Uroviricota</taxon>
        <taxon>Caudoviricetes</taxon>
        <taxon>Muvirus</taxon>
        <taxon>Muvirus mu</taxon>
    </lineage>
</organism>
<name>TARGB_BPD10</name>
<comment type="function">
    <text evidence="1">Selects the target DNA sites for transposition. Recruits DDE-recombinase A to the target sites and catalytically activates it. Displays non-specific DNA-binding properties. Polymerizes as helical filaments around the DNA. Coating of the DNA by the target DNA activator B might play a role in favoring target-primed replication over integration. Prevents self-integration into an integrated copy of the viral genome. This mechanism is called target immunity and is achieved by two mechanisms: first, the target DNA activator B dissociates from the viral genome ends upon interaction in cis with DDE-recombinase A, which makes the viral genome ends a poor target for new insertions. Second, the interior of the viral genome may also be protected from integration events by the target DNA activator B being strongly bound throughout the whole viral genome (By similarity).</text>
</comment>
<comment type="catalytic activity">
    <reaction evidence="2">
        <text>ATP + H2O = ADP + phosphate + H(+)</text>
        <dbReference type="Rhea" id="RHEA:13065"/>
        <dbReference type="ChEBI" id="CHEBI:15377"/>
        <dbReference type="ChEBI" id="CHEBI:15378"/>
        <dbReference type="ChEBI" id="CHEBI:30616"/>
        <dbReference type="ChEBI" id="CHEBI:43474"/>
        <dbReference type="ChEBI" id="CHEBI:456216"/>
    </reaction>
</comment>
<comment type="cofactor">
    <cofactor evidence="1">
        <name>Mg(2+)</name>
        <dbReference type="ChEBI" id="CHEBI:18420"/>
    </cofactor>
</comment>
<comment type="subunit">
    <text evidence="1">Homomultimer. Polymerizes in presence of ATP, preferentially on DNA. ATP hydrolysis triggers polymers dissassembly. Interacts with DDE-recombinase A; this interaction stimulates the catalytic activity of the latter as well as the ATPase activity of MuB followed by its dissociation from DNA (By similarity).</text>
</comment>
<comment type="subcellular location">
    <subcellularLocation>
        <location evidence="1">Host cytoplasm</location>
    </subcellularLocation>
</comment>
<comment type="induction">
    <text>Expressed in the early phase of the viral replicative cycle. Expression of early genes is repressed by viral Repc (latency) and favored by viral Ner protein.</text>
</comment>
<comment type="domain">
    <text evidence="2">The N-terminus region contains a putative DNA-binding region that allows filament-filament interactions and probably favors MuB polymerization and filament clustering (By similarity). The central region contains the ATPase module (By similarity). The C-terminus comprises four helices arranged in a loosely packed bundle which can bind to dsDNA (By similarity).</text>
</comment>
<comment type="similarity">
    <text evidence="4">Belongs to the AAA ATPase family.</text>
</comment>
<sequence>MNISDIRAGLRTLVENEETTFKQIALESGLSTGTISSFINDKYNGDNERVSQMLQRWLEKYHAVAELPEPPRFVETQTVKQIWTSMRFASLTESIAVVCGNPGVGKTEAAREYRRTNNNVWMITITPSCASVLECLTELAFELGMNDAPRRKGPLSRALRRRLEGTQGLVIIDEADHLGAEVLEELRLLQESTRTGLVLMGNHRVYSNMTGGNRTVEFARLFSRIAKRTAINKTKKADVKAIADAWQINGENELELLQQIAQKPGALRILNHSLRLAAMTAHGKGERVNEDYLRQAFRELDLDVDISTLLRN</sequence>
<gene>
    <name type="primary">B</name>
</gene>
<keyword id="KW-0067">ATP-binding</keyword>
<keyword id="KW-0229">DNA integration</keyword>
<keyword id="KW-0235">DNA replication</keyword>
<keyword id="KW-0238">DNA-binding</keyword>
<keyword id="KW-0244">Early protein</keyword>
<keyword id="KW-1035">Host cytoplasm</keyword>
<keyword id="KW-0378">Hydrolase</keyword>
<keyword id="KW-0460">Magnesium</keyword>
<keyword id="KW-0479">Metal-binding</keyword>
<keyword id="KW-0547">Nucleotide-binding</keyword>
<keyword id="KW-0815">Transposition</keyword>
<keyword id="KW-1194">Viral DNA replication</keyword>
<proteinExistence type="evidence at transcript level"/>
<evidence type="ECO:0000250" key="1"/>
<evidence type="ECO:0000250" key="2">
    <source>
        <dbReference type="UniProtKB" id="P03763"/>
    </source>
</evidence>
<evidence type="ECO:0000255" key="3"/>
<evidence type="ECO:0000305" key="4"/>
<dbReference type="EC" id="3.6.1.-" evidence="2"/>
<dbReference type="EMBL" id="M18902">
    <property type="protein sequence ID" value="AAA32205.1"/>
    <property type="molecule type" value="Genomic_DNA"/>
</dbReference>
<dbReference type="EMBL" id="GQ357916">
    <property type="protein sequence ID" value="ACV50263.1"/>
    <property type="molecule type" value="Genomic_DNA"/>
</dbReference>
<dbReference type="RefSeq" id="YP_003335752.1">
    <property type="nucleotide sequence ID" value="NC_013594.1"/>
</dbReference>
<dbReference type="BMRB" id="P13771"/>
<dbReference type="SMR" id="P13771"/>
<dbReference type="GeneID" id="8658815"/>
<dbReference type="KEGG" id="vg:8658815"/>
<dbReference type="OrthoDB" id="4614at10239"/>
<dbReference type="Proteomes" id="UP000000320">
    <property type="component" value="Genome"/>
</dbReference>
<dbReference type="GO" id="GO:0030430">
    <property type="term" value="C:host cell cytoplasm"/>
    <property type="evidence" value="ECO:0007669"/>
    <property type="project" value="UniProtKB-SubCell"/>
</dbReference>
<dbReference type="GO" id="GO:0005524">
    <property type="term" value="F:ATP binding"/>
    <property type="evidence" value="ECO:0007669"/>
    <property type="project" value="UniProtKB-KW"/>
</dbReference>
<dbReference type="GO" id="GO:0016887">
    <property type="term" value="F:ATP hydrolysis activity"/>
    <property type="evidence" value="ECO:0007669"/>
    <property type="project" value="InterPro"/>
</dbReference>
<dbReference type="GO" id="GO:0003677">
    <property type="term" value="F:DNA binding"/>
    <property type="evidence" value="ECO:0007669"/>
    <property type="project" value="UniProtKB-KW"/>
</dbReference>
<dbReference type="GO" id="GO:0046872">
    <property type="term" value="F:metal ion binding"/>
    <property type="evidence" value="ECO:0007669"/>
    <property type="project" value="UniProtKB-KW"/>
</dbReference>
<dbReference type="GO" id="GO:0015074">
    <property type="term" value="P:DNA integration"/>
    <property type="evidence" value="ECO:0007669"/>
    <property type="project" value="UniProtKB-KW"/>
</dbReference>
<dbReference type="GO" id="GO:0006260">
    <property type="term" value="P:DNA replication"/>
    <property type="evidence" value="ECO:0007669"/>
    <property type="project" value="UniProtKB-KW"/>
</dbReference>
<dbReference type="GO" id="GO:0006313">
    <property type="term" value="P:DNA transposition"/>
    <property type="evidence" value="ECO:0007669"/>
    <property type="project" value="InterPro"/>
</dbReference>
<dbReference type="GO" id="GO:0039693">
    <property type="term" value="P:viral DNA genome replication"/>
    <property type="evidence" value="ECO:0007669"/>
    <property type="project" value="UniProtKB-KW"/>
</dbReference>
<dbReference type="CDD" id="cd01670">
    <property type="entry name" value="Death"/>
    <property type="match status" value="1"/>
</dbReference>
<dbReference type="FunFam" id="1.10.1180.10:FF:000001">
    <property type="entry name" value="DNA transposition protein (GpB)"/>
    <property type="match status" value="1"/>
</dbReference>
<dbReference type="FunFam" id="3.40.50.300:FF:002149">
    <property type="entry name" value="DNA transposition protein (GpB)"/>
    <property type="match status" value="1"/>
</dbReference>
<dbReference type="Gene3D" id="1.10.1180.10">
    <property type="entry name" value="B transposition protein, C-terminal domain"/>
    <property type="match status" value="1"/>
</dbReference>
<dbReference type="Gene3D" id="1.10.260.40">
    <property type="entry name" value="lambda repressor-like DNA-binding domains"/>
    <property type="match status" value="1"/>
</dbReference>
<dbReference type="Gene3D" id="3.40.50.300">
    <property type="entry name" value="P-loop containing nucleotide triphosphate hydrolases"/>
    <property type="match status" value="1"/>
</dbReference>
<dbReference type="InterPro" id="IPR049945">
    <property type="entry name" value="AAA_22"/>
</dbReference>
<dbReference type="InterPro" id="IPR036733">
    <property type="entry name" value="B_transposit_C_sf"/>
</dbReference>
<dbReference type="InterPro" id="IPR009084">
    <property type="entry name" value="B_transpositn_C"/>
</dbReference>
<dbReference type="InterPro" id="IPR052026">
    <property type="entry name" value="ExeA_AAA_ATPase_DNA-bind"/>
</dbReference>
<dbReference type="InterPro" id="IPR010982">
    <property type="entry name" value="Lambda_DNA-bd_dom_sf"/>
</dbReference>
<dbReference type="InterPro" id="IPR027417">
    <property type="entry name" value="P-loop_NTPase"/>
</dbReference>
<dbReference type="PANTHER" id="PTHR35894">
    <property type="entry name" value="GENERAL SECRETION PATHWAY PROTEIN A-RELATED"/>
    <property type="match status" value="1"/>
</dbReference>
<dbReference type="PANTHER" id="PTHR35894:SF5">
    <property type="entry name" value="MU-LIKE PROPHAGE FLUMU DNA TRANSPOSITION PROTEIN B"/>
    <property type="match status" value="1"/>
</dbReference>
<dbReference type="Pfam" id="PF13401">
    <property type="entry name" value="AAA_22"/>
    <property type="match status" value="1"/>
</dbReference>
<dbReference type="Pfam" id="PF09077">
    <property type="entry name" value="Phage-MuB_C"/>
    <property type="match status" value="1"/>
</dbReference>
<dbReference type="SUPFAM" id="SSF47681">
    <property type="entry name" value="C-terminal domain of B transposition protein"/>
    <property type="match status" value="1"/>
</dbReference>
<dbReference type="SUPFAM" id="SSF52540">
    <property type="entry name" value="P-loop containing nucleoside triphosphate hydrolases"/>
    <property type="match status" value="1"/>
</dbReference>
<accession>P13771</accession>
<accession>C9DGL2</accession>
<protein>
    <recommendedName>
        <fullName>ATP-dependent target DNA activator B</fullName>
        <ecNumber evidence="2">3.6.1.-</ecNumber>
    </recommendedName>
    <alternativeName>
        <fullName>Gene product B</fullName>
        <shortName>gpB</shortName>
    </alternativeName>
    <alternativeName>
        <fullName>MuB</fullName>
    </alternativeName>
</protein>
<feature type="chain" id="PRO_0000077678" description="ATP-dependent target DNA activator B">
    <location>
        <begin position="1"/>
        <end position="312"/>
    </location>
</feature>
<feature type="DNA-binding region" description="H-T-H motif" evidence="3">
    <location>
        <begin position="21"/>
        <end position="40"/>
    </location>
</feature>
<feature type="DNA-binding region" evidence="2">
    <location>
        <begin position="223"/>
        <end position="312"/>
    </location>
</feature>
<feature type="binding site" evidence="2">
    <location>
        <begin position="100"/>
        <end position="107"/>
    </location>
    <ligand>
        <name>ATP</name>
        <dbReference type="ChEBI" id="CHEBI:30616"/>
    </ligand>
</feature>
<feature type="site" description="Involved in DNA binding" evidence="2">
    <location>
        <position position="151"/>
    </location>
</feature>
<feature type="site" description="Involved in DNA binding" evidence="2">
    <location>
        <position position="152"/>
    </location>
</feature>
<feature type="site" description="Sensor-1; involved in ATP-binding and hydrolysis" evidence="2">
    <location>
        <position position="202"/>
    </location>
</feature>
<feature type="site" description="R-finger; involved in ATP-binding" evidence="2">
    <location>
        <position position="224"/>
    </location>
</feature>
<feature type="site" description="Sensor-2; involved in ATP-binding and hydrolysis" evidence="2">
    <location>
        <position position="268"/>
    </location>
</feature>
<organismHost>
    <name type="scientific">Escherichia coli</name>
    <dbReference type="NCBI Taxonomy" id="562"/>
</organismHost>
<reference key="1">
    <citation type="submission" date="2009-07" db="EMBL/GenBank/DDBJ databases">
        <authorList>
            <person name="Kropinski A.M."/>
            <person name="Villegas A."/>
            <person name="Lingohr E.J."/>
        </authorList>
    </citation>
    <scope>NUCLEOTIDE SEQUENCE [GENOMIC DNA]</scope>
</reference>
<reference key="2">
    <citation type="journal article" date="1988" name="Gene">
        <title>Identification of the bacteriophage D108 kil gene and of the second region of sequence nonhomology with bacteriophage Mu.</title>
        <authorList>
            <person name="Waggoner B.T."/>
            <person name="Wade T."/>
            <person name="Pato M.L."/>
        </authorList>
    </citation>
    <scope>NUCLEOTIDE SEQUENCE [GENOMIC DNA] OF 289-312</scope>
</reference>